<keyword id="KW-1003">Cell membrane</keyword>
<keyword id="KW-0342">GTP-binding</keyword>
<keyword id="KW-0449">Lipoprotein</keyword>
<keyword id="KW-0472">Membrane</keyword>
<keyword id="KW-0547">Nucleotide-binding</keyword>
<keyword id="KW-0636">Prenylation</keyword>
<keyword id="KW-1185">Reference proteome</keyword>
<organism>
    <name type="scientific">Nicotiana tabacum</name>
    <name type="common">Common tobacco</name>
    <dbReference type="NCBI Taxonomy" id="4097"/>
    <lineage>
        <taxon>Eukaryota</taxon>
        <taxon>Viridiplantae</taxon>
        <taxon>Streptophyta</taxon>
        <taxon>Embryophyta</taxon>
        <taxon>Tracheophyta</taxon>
        <taxon>Spermatophyta</taxon>
        <taxon>Magnoliopsida</taxon>
        <taxon>eudicotyledons</taxon>
        <taxon>Gunneridae</taxon>
        <taxon>Pentapetalae</taxon>
        <taxon>asterids</taxon>
        <taxon>lamiids</taxon>
        <taxon>Solanales</taxon>
        <taxon>Solanaceae</taxon>
        <taxon>Nicotianoideae</taxon>
        <taxon>Nicotianeae</taxon>
        <taxon>Nicotiana</taxon>
    </lineage>
</organism>
<accession>Q40521</accession>
<comment type="subcellular location">
    <subcellularLocation>
        <location evidence="3">Cell membrane</location>
        <topology evidence="3">Lipid-anchor</topology>
        <orientation evidence="3">Cytoplasmic side</orientation>
    </subcellularLocation>
</comment>
<comment type="similarity">
    <text evidence="3">Belongs to the small GTPase superfamily. Rab family.</text>
</comment>
<proteinExistence type="evidence at transcript level"/>
<name>RB11B_TOBAC</name>
<evidence type="ECO:0000250" key="1"/>
<evidence type="ECO:0000255" key="2"/>
<evidence type="ECO:0000305" key="3"/>
<dbReference type="EMBL" id="L29269">
    <property type="protein sequence ID" value="AAA74113.1"/>
    <property type="molecule type" value="mRNA"/>
</dbReference>
<dbReference type="PIR" id="T03620">
    <property type="entry name" value="T03620"/>
</dbReference>
<dbReference type="RefSeq" id="NP_001312004.1">
    <property type="nucleotide sequence ID" value="NM_001325075.1"/>
</dbReference>
<dbReference type="SMR" id="Q40521"/>
<dbReference type="STRING" id="4097.Q40521"/>
<dbReference type="PaxDb" id="4097-Q40521"/>
<dbReference type="GeneID" id="107770722"/>
<dbReference type="KEGG" id="nta:107770722"/>
<dbReference type="OrthoDB" id="9989112at2759"/>
<dbReference type="Proteomes" id="UP000084051">
    <property type="component" value="Unplaced"/>
</dbReference>
<dbReference type="GO" id="GO:0005768">
    <property type="term" value="C:endosome"/>
    <property type="evidence" value="ECO:0000318"/>
    <property type="project" value="GO_Central"/>
</dbReference>
<dbReference type="GO" id="GO:0005886">
    <property type="term" value="C:plasma membrane"/>
    <property type="evidence" value="ECO:0007669"/>
    <property type="project" value="UniProtKB-SubCell"/>
</dbReference>
<dbReference type="GO" id="GO:0005525">
    <property type="term" value="F:GTP binding"/>
    <property type="evidence" value="ECO:0000318"/>
    <property type="project" value="GO_Central"/>
</dbReference>
<dbReference type="GO" id="GO:0003924">
    <property type="term" value="F:GTPase activity"/>
    <property type="evidence" value="ECO:0000318"/>
    <property type="project" value="GO_Central"/>
</dbReference>
<dbReference type="GO" id="GO:0016192">
    <property type="term" value="P:vesicle-mediated transport"/>
    <property type="evidence" value="ECO:0000318"/>
    <property type="project" value="GO_Central"/>
</dbReference>
<dbReference type="CDD" id="cd01868">
    <property type="entry name" value="Rab11_like"/>
    <property type="match status" value="1"/>
</dbReference>
<dbReference type="FunFam" id="3.40.50.300:FF:000067">
    <property type="entry name" value="ras-related protein RABA1f"/>
    <property type="match status" value="1"/>
</dbReference>
<dbReference type="Gene3D" id="3.40.50.300">
    <property type="entry name" value="P-loop containing nucleotide triphosphate hydrolases"/>
    <property type="match status" value="1"/>
</dbReference>
<dbReference type="InterPro" id="IPR027417">
    <property type="entry name" value="P-loop_NTPase"/>
</dbReference>
<dbReference type="InterPro" id="IPR050209">
    <property type="entry name" value="Rab_GTPases_membrane_traffic"/>
</dbReference>
<dbReference type="InterPro" id="IPR005225">
    <property type="entry name" value="Small_GTP-bd"/>
</dbReference>
<dbReference type="InterPro" id="IPR001806">
    <property type="entry name" value="Small_GTPase"/>
</dbReference>
<dbReference type="NCBIfam" id="TIGR00231">
    <property type="entry name" value="small_GTP"/>
    <property type="match status" value="1"/>
</dbReference>
<dbReference type="PANTHER" id="PTHR47979">
    <property type="entry name" value="DRAB11-RELATED"/>
    <property type="match status" value="1"/>
</dbReference>
<dbReference type="Pfam" id="PF00071">
    <property type="entry name" value="Ras"/>
    <property type="match status" value="1"/>
</dbReference>
<dbReference type="PRINTS" id="PR00449">
    <property type="entry name" value="RASTRNSFRMNG"/>
</dbReference>
<dbReference type="SMART" id="SM00175">
    <property type="entry name" value="RAB"/>
    <property type="match status" value="1"/>
</dbReference>
<dbReference type="SMART" id="SM00176">
    <property type="entry name" value="RAN"/>
    <property type="match status" value="1"/>
</dbReference>
<dbReference type="SMART" id="SM00173">
    <property type="entry name" value="RAS"/>
    <property type="match status" value="1"/>
</dbReference>
<dbReference type="SMART" id="SM00174">
    <property type="entry name" value="RHO"/>
    <property type="match status" value="1"/>
</dbReference>
<dbReference type="SUPFAM" id="SSF52540">
    <property type="entry name" value="P-loop containing nucleoside triphosphate hydrolases"/>
    <property type="match status" value="1"/>
</dbReference>
<dbReference type="PROSITE" id="PS51419">
    <property type="entry name" value="RAB"/>
    <property type="match status" value="1"/>
</dbReference>
<feature type="chain" id="PRO_0000121176" description="Ras-related protein Rab11B">
    <location>
        <begin position="1"/>
        <end position="217"/>
    </location>
</feature>
<feature type="short sequence motif" description="Effector region" evidence="2">
    <location>
        <begin position="43"/>
        <end position="51"/>
    </location>
</feature>
<feature type="binding site" evidence="1">
    <location>
        <begin position="21"/>
        <end position="28"/>
    </location>
    <ligand>
        <name>GTP</name>
        <dbReference type="ChEBI" id="CHEBI:37565"/>
    </ligand>
</feature>
<feature type="binding site" evidence="1">
    <location>
        <begin position="69"/>
        <end position="73"/>
    </location>
    <ligand>
        <name>GTP</name>
        <dbReference type="ChEBI" id="CHEBI:37565"/>
    </ligand>
</feature>
<feature type="binding site" evidence="1">
    <location>
        <begin position="127"/>
        <end position="130"/>
    </location>
    <ligand>
        <name>GTP</name>
        <dbReference type="ChEBI" id="CHEBI:37565"/>
    </ligand>
</feature>
<feature type="lipid moiety-binding region" description="S-geranylgeranyl cysteine" evidence="1">
    <location>
        <position position="214"/>
    </location>
</feature>
<feature type="lipid moiety-binding region" description="S-geranylgeranyl cysteine" evidence="1">
    <location>
        <position position="215"/>
    </location>
</feature>
<sequence>MAGGYRAEDDYDYLFKLVLIGDSGVGKSNLLSRFSRNEFNLESKSTIGVEFATRSIRVDDKIVKAQIWDTAGQERYRAITSAYYRGAVGALVVYDITRHVTFENVERWLKELRDHTDQNIVIMLVGNKADLRHLRAVSTEDAKAFAERENTFFMETSALESLNVENAFTEVLTEIYKVVCRKALEVGDDPAALPKGQTINVGKDDVSAVKKVGCCSS</sequence>
<protein>
    <recommendedName>
        <fullName>Ras-related protein Rab11B</fullName>
    </recommendedName>
</protein>
<gene>
    <name type="primary">RAB11B</name>
</gene>
<reference key="1">
    <citation type="journal article" date="1995" name="Plant Physiol.">
        <title>Characterization of membrane-bound small GTP-binding proteins from Nicotiana tabacum.</title>
        <authorList>
            <person name="Haizel T."/>
            <person name="Merkle T."/>
            <person name="Turck F."/>
            <person name="Nagy F."/>
        </authorList>
    </citation>
    <scope>NUCLEOTIDE SEQUENCE [MRNA]</scope>
    <source>
        <strain>cv. SR1</strain>
    </source>
</reference>